<keyword id="KW-0521">NADP</keyword>
<keyword id="KW-0560">Oxidoreductase</keyword>
<keyword id="KW-1185">Reference proteome</keyword>
<keyword id="KW-0964">Secreted</keyword>
<keyword id="KW-0732">Signal</keyword>
<accession>A4IGM4</accession>
<proteinExistence type="evidence at transcript level"/>
<feature type="signal peptide" evidence="3">
    <location>
        <begin position="1"/>
        <end position="17"/>
    </location>
</feature>
<feature type="chain" id="PRO_0000316822" description="Hydroxysteroid 11-beta-dehydrogenase 1-like protein">
    <location>
        <begin position="18"/>
        <end position="286"/>
    </location>
</feature>
<feature type="active site" description="Proton acceptor" evidence="4">
    <location>
        <position position="181"/>
    </location>
</feature>
<feature type="binding site" evidence="1">
    <location>
        <begin position="39"/>
        <end position="65"/>
    </location>
    <ligand>
        <name>NADP(+)</name>
        <dbReference type="ChEBI" id="CHEBI:58349"/>
    </ligand>
</feature>
<feature type="binding site" evidence="1">
    <location>
        <begin position="90"/>
        <end position="91"/>
    </location>
    <ligand>
        <name>NADP(+)</name>
        <dbReference type="ChEBI" id="CHEBI:58349"/>
    </ligand>
</feature>
<feature type="binding site" evidence="1">
    <location>
        <begin position="117"/>
        <end position="119"/>
    </location>
    <ligand>
        <name>NADP(+)</name>
        <dbReference type="ChEBI" id="CHEBI:58349"/>
    </ligand>
</feature>
<feature type="binding site" evidence="1">
    <location>
        <position position="168"/>
    </location>
    <ligand>
        <name>substrate</name>
    </ligand>
</feature>
<feature type="binding site" evidence="1">
    <location>
        <begin position="181"/>
        <end position="185"/>
    </location>
    <ligand>
        <name>NADP(+)</name>
        <dbReference type="ChEBI" id="CHEBI:58349"/>
    </ligand>
</feature>
<feature type="binding site" evidence="1">
    <location>
        <begin position="214"/>
        <end position="220"/>
    </location>
    <ligand>
        <name>NADP(+)</name>
        <dbReference type="ChEBI" id="CHEBI:58349"/>
    </ligand>
</feature>
<sequence length="286" mass="32162">MGIHIKRWCFIILVASAAYILRDSFDPETLANTRVLVTGASTGIGEEIAYHYARAGAKLVLTARREHALQEVKSRCLELGAKNVFLVVADMASHNAREQVVAEALSALGGLDYLVLNHIGWTPFKMWDGDVNHTRWLMEVNFLSYIHLATAALPYLTQSKGSIIVLSSLTAKTPIPYTTSYAASKFALEGFFSSLRHELTMQNNPVSITLCILGLIDTQSAMEKIKDKITMSAYPASDAALAVVSAGAGRQREMYYPWFVRPLCFFRDWFPQHRDWFIQRMYHYNS</sequence>
<organism>
    <name type="scientific">Xenopus tropicalis</name>
    <name type="common">Western clawed frog</name>
    <name type="synonym">Silurana tropicalis</name>
    <dbReference type="NCBI Taxonomy" id="8364"/>
    <lineage>
        <taxon>Eukaryota</taxon>
        <taxon>Metazoa</taxon>
        <taxon>Chordata</taxon>
        <taxon>Craniata</taxon>
        <taxon>Vertebrata</taxon>
        <taxon>Euteleostomi</taxon>
        <taxon>Amphibia</taxon>
        <taxon>Batrachia</taxon>
        <taxon>Anura</taxon>
        <taxon>Pipoidea</taxon>
        <taxon>Pipidae</taxon>
        <taxon>Xenopodinae</taxon>
        <taxon>Xenopus</taxon>
        <taxon>Silurana</taxon>
    </lineage>
</organism>
<protein>
    <recommendedName>
        <fullName>Hydroxysteroid 11-beta-dehydrogenase 1-like protein</fullName>
        <ecNumber evidence="2">1.1.1.-</ecNumber>
    </recommendedName>
    <alternativeName>
        <fullName>11-beta-hydroxysteroid dehydrogenase type 3</fullName>
        <shortName>11-DH3</shortName>
        <shortName>11-beta-HSD3</shortName>
    </alternativeName>
</protein>
<evidence type="ECO:0000250" key="1"/>
<evidence type="ECO:0000250" key="2">
    <source>
        <dbReference type="UniProtKB" id="Q7Z5J1"/>
    </source>
</evidence>
<evidence type="ECO:0000255" key="3"/>
<evidence type="ECO:0000255" key="4">
    <source>
        <dbReference type="PROSITE-ProRule" id="PRU10001"/>
    </source>
</evidence>
<evidence type="ECO:0000305" key="5"/>
<name>DHI1L_XENTR</name>
<comment type="function">
    <text evidence="2">Unidirectional NADP(+)-dependent cortisol dehydrogenase (in vitro).</text>
</comment>
<comment type="catalytic activity">
    <reaction evidence="2">
        <text>cortisone + NADPH + H(+) = cortisol + NADP(+)</text>
        <dbReference type="Rhea" id="RHEA:68616"/>
        <dbReference type="ChEBI" id="CHEBI:15378"/>
        <dbReference type="ChEBI" id="CHEBI:16962"/>
        <dbReference type="ChEBI" id="CHEBI:17650"/>
        <dbReference type="ChEBI" id="CHEBI:57783"/>
        <dbReference type="ChEBI" id="CHEBI:58349"/>
    </reaction>
    <physiologicalReaction direction="right-to-left" evidence="2">
        <dbReference type="Rhea" id="RHEA:68618"/>
    </physiologicalReaction>
</comment>
<comment type="subcellular location">
    <subcellularLocation>
        <location evidence="5">Secreted</location>
    </subcellularLocation>
</comment>
<comment type="similarity">
    <text evidence="5">Belongs to the short-chain dehydrogenases/reductases (SDR) family.</text>
</comment>
<comment type="caution">
    <text evidence="5">Present in human, non-human primate, sheep, pig and many other higher organisms, whereas an ortholog is absent in the genomes of mouse, rat and rabbit.</text>
</comment>
<dbReference type="EC" id="1.1.1.-" evidence="2"/>
<dbReference type="EMBL" id="BC135167">
    <property type="protein sequence ID" value="AAI35168.1"/>
    <property type="molecule type" value="mRNA"/>
</dbReference>
<dbReference type="RefSeq" id="NP_001090784.1">
    <property type="nucleotide sequence ID" value="NM_001097315.1"/>
</dbReference>
<dbReference type="SMR" id="A4IGM4"/>
<dbReference type="STRING" id="8364.ENSXETP00000027776"/>
<dbReference type="PaxDb" id="8364-ENSXETP00000031363"/>
<dbReference type="DNASU" id="100037875"/>
<dbReference type="GeneID" id="100037875"/>
<dbReference type="KEGG" id="xtr:100037875"/>
<dbReference type="AGR" id="Xenbase:XB-GENE-5851849"/>
<dbReference type="CTD" id="374875"/>
<dbReference type="Xenbase" id="XB-GENE-5851849">
    <property type="gene designation" value="hsd11b1l"/>
</dbReference>
<dbReference type="eggNOG" id="KOG1205">
    <property type="taxonomic scope" value="Eukaryota"/>
</dbReference>
<dbReference type="HOGENOM" id="CLU_010194_2_1_1"/>
<dbReference type="InParanoid" id="A4IGM4"/>
<dbReference type="OMA" id="EYTRWLM"/>
<dbReference type="OrthoDB" id="1933717at2759"/>
<dbReference type="Proteomes" id="UP000008143">
    <property type="component" value="Chromosome 1"/>
</dbReference>
<dbReference type="Bgee" id="ENSXETG00000014342">
    <property type="expression patterns" value="Expressed in male organism and 3 other cell types or tissues"/>
</dbReference>
<dbReference type="GO" id="GO:0005576">
    <property type="term" value="C:extracellular region"/>
    <property type="evidence" value="ECO:0007669"/>
    <property type="project" value="UniProtKB-SubCell"/>
</dbReference>
<dbReference type="GO" id="GO:0016491">
    <property type="term" value="F:oxidoreductase activity"/>
    <property type="evidence" value="ECO:0007669"/>
    <property type="project" value="UniProtKB-KW"/>
</dbReference>
<dbReference type="CDD" id="cd05332">
    <property type="entry name" value="11beta-HSD1_like_SDR_c"/>
    <property type="match status" value="1"/>
</dbReference>
<dbReference type="Gene3D" id="3.40.50.720">
    <property type="entry name" value="NAD(P)-binding Rossmann-like Domain"/>
    <property type="match status" value="1"/>
</dbReference>
<dbReference type="InterPro" id="IPR051253">
    <property type="entry name" value="11-beta-HSD"/>
</dbReference>
<dbReference type="InterPro" id="IPR036291">
    <property type="entry name" value="NAD(P)-bd_dom_sf"/>
</dbReference>
<dbReference type="InterPro" id="IPR020904">
    <property type="entry name" value="Sc_DH/Rdtase_CS"/>
</dbReference>
<dbReference type="InterPro" id="IPR002347">
    <property type="entry name" value="SDR_fam"/>
</dbReference>
<dbReference type="PANTHER" id="PTHR44279">
    <property type="entry name" value="HYDROXYSTEROID (11-BETA) DEHYDROGENASE 1-LIKE B-RELATED"/>
    <property type="match status" value="1"/>
</dbReference>
<dbReference type="PANTHER" id="PTHR44279:SF3">
    <property type="entry name" value="HYDROXYSTEROID 11-BETA-DEHYDROGENASE 1-LIKE PROTEIN"/>
    <property type="match status" value="1"/>
</dbReference>
<dbReference type="Pfam" id="PF00106">
    <property type="entry name" value="adh_short"/>
    <property type="match status" value="1"/>
</dbReference>
<dbReference type="PRINTS" id="PR00081">
    <property type="entry name" value="GDHRDH"/>
</dbReference>
<dbReference type="SUPFAM" id="SSF51735">
    <property type="entry name" value="NAD(P)-binding Rossmann-fold domains"/>
    <property type="match status" value="1"/>
</dbReference>
<dbReference type="PROSITE" id="PS00061">
    <property type="entry name" value="ADH_SHORT"/>
    <property type="match status" value="1"/>
</dbReference>
<gene>
    <name type="primary">hsd11b1l</name>
    <name type="synonym">hsd3</name>
</gene>
<reference key="1">
    <citation type="submission" date="2007-03" db="EMBL/GenBank/DDBJ databases">
        <authorList>
            <consortium name="NIH - Xenopus Gene Collection (XGC) project"/>
        </authorList>
    </citation>
    <scope>NUCLEOTIDE SEQUENCE [LARGE SCALE MRNA]</scope>
    <source>
        <tissue>Embryo</tissue>
    </source>
</reference>